<feature type="chain" id="PRO_1000091533" description="Serine hydroxymethyltransferase">
    <location>
        <begin position="1"/>
        <end position="419"/>
    </location>
</feature>
<feature type="binding site" evidence="1">
    <location>
        <position position="121"/>
    </location>
    <ligand>
        <name>(6S)-5,6,7,8-tetrahydrofolate</name>
        <dbReference type="ChEBI" id="CHEBI:57453"/>
    </ligand>
</feature>
<feature type="binding site" evidence="1">
    <location>
        <begin position="125"/>
        <end position="127"/>
    </location>
    <ligand>
        <name>(6S)-5,6,7,8-tetrahydrofolate</name>
        <dbReference type="ChEBI" id="CHEBI:57453"/>
    </ligand>
</feature>
<feature type="binding site" evidence="1">
    <location>
        <begin position="354"/>
        <end position="356"/>
    </location>
    <ligand>
        <name>(6S)-5,6,7,8-tetrahydrofolate</name>
        <dbReference type="ChEBI" id="CHEBI:57453"/>
    </ligand>
</feature>
<feature type="site" description="Plays an important role in substrate specificity" evidence="1">
    <location>
        <position position="228"/>
    </location>
</feature>
<feature type="modified residue" description="N6-(pyridoxal phosphate)lysine" evidence="1">
    <location>
        <position position="229"/>
    </location>
</feature>
<dbReference type="EC" id="2.1.2.1" evidence="1"/>
<dbReference type="EMBL" id="CP001020">
    <property type="protein sequence ID" value="ACJ20658.1"/>
    <property type="molecule type" value="Genomic_DNA"/>
</dbReference>
<dbReference type="RefSeq" id="WP_005771737.1">
    <property type="nucleotide sequence ID" value="NC_011528.1"/>
</dbReference>
<dbReference type="SMR" id="B6J8Q9"/>
<dbReference type="KEGG" id="cbc:CbuK_1492"/>
<dbReference type="HOGENOM" id="CLU_022477_2_1_6"/>
<dbReference type="UniPathway" id="UPA00193"/>
<dbReference type="UniPathway" id="UPA00288">
    <property type="reaction ID" value="UER01023"/>
</dbReference>
<dbReference type="GO" id="GO:0005829">
    <property type="term" value="C:cytosol"/>
    <property type="evidence" value="ECO:0007669"/>
    <property type="project" value="TreeGrafter"/>
</dbReference>
<dbReference type="GO" id="GO:0004372">
    <property type="term" value="F:glycine hydroxymethyltransferase activity"/>
    <property type="evidence" value="ECO:0007669"/>
    <property type="project" value="UniProtKB-UniRule"/>
</dbReference>
<dbReference type="GO" id="GO:0030170">
    <property type="term" value="F:pyridoxal phosphate binding"/>
    <property type="evidence" value="ECO:0007669"/>
    <property type="project" value="UniProtKB-UniRule"/>
</dbReference>
<dbReference type="GO" id="GO:0019264">
    <property type="term" value="P:glycine biosynthetic process from serine"/>
    <property type="evidence" value="ECO:0007669"/>
    <property type="project" value="UniProtKB-UniRule"/>
</dbReference>
<dbReference type="GO" id="GO:0035999">
    <property type="term" value="P:tetrahydrofolate interconversion"/>
    <property type="evidence" value="ECO:0007669"/>
    <property type="project" value="UniProtKB-UniRule"/>
</dbReference>
<dbReference type="CDD" id="cd00378">
    <property type="entry name" value="SHMT"/>
    <property type="match status" value="1"/>
</dbReference>
<dbReference type="FunFam" id="3.40.640.10:FF:000001">
    <property type="entry name" value="Serine hydroxymethyltransferase"/>
    <property type="match status" value="1"/>
</dbReference>
<dbReference type="FunFam" id="3.90.1150.10:FF:000003">
    <property type="entry name" value="Serine hydroxymethyltransferase"/>
    <property type="match status" value="1"/>
</dbReference>
<dbReference type="Gene3D" id="3.90.1150.10">
    <property type="entry name" value="Aspartate Aminotransferase, domain 1"/>
    <property type="match status" value="1"/>
</dbReference>
<dbReference type="Gene3D" id="3.40.640.10">
    <property type="entry name" value="Type I PLP-dependent aspartate aminotransferase-like (Major domain)"/>
    <property type="match status" value="1"/>
</dbReference>
<dbReference type="HAMAP" id="MF_00051">
    <property type="entry name" value="SHMT"/>
    <property type="match status" value="1"/>
</dbReference>
<dbReference type="InterPro" id="IPR015424">
    <property type="entry name" value="PyrdxlP-dep_Trfase"/>
</dbReference>
<dbReference type="InterPro" id="IPR015421">
    <property type="entry name" value="PyrdxlP-dep_Trfase_major"/>
</dbReference>
<dbReference type="InterPro" id="IPR015422">
    <property type="entry name" value="PyrdxlP-dep_Trfase_small"/>
</dbReference>
<dbReference type="InterPro" id="IPR001085">
    <property type="entry name" value="Ser_HO-MeTrfase"/>
</dbReference>
<dbReference type="InterPro" id="IPR049943">
    <property type="entry name" value="Ser_HO-MeTrfase-like"/>
</dbReference>
<dbReference type="InterPro" id="IPR019798">
    <property type="entry name" value="Ser_HO-MeTrfase_PLP_BS"/>
</dbReference>
<dbReference type="InterPro" id="IPR039429">
    <property type="entry name" value="SHMT-like_dom"/>
</dbReference>
<dbReference type="NCBIfam" id="NF000586">
    <property type="entry name" value="PRK00011.1"/>
    <property type="match status" value="1"/>
</dbReference>
<dbReference type="PANTHER" id="PTHR11680">
    <property type="entry name" value="SERINE HYDROXYMETHYLTRANSFERASE"/>
    <property type="match status" value="1"/>
</dbReference>
<dbReference type="PANTHER" id="PTHR11680:SF50">
    <property type="entry name" value="SERINE HYDROXYMETHYLTRANSFERASE"/>
    <property type="match status" value="1"/>
</dbReference>
<dbReference type="Pfam" id="PF00464">
    <property type="entry name" value="SHMT"/>
    <property type="match status" value="1"/>
</dbReference>
<dbReference type="PIRSF" id="PIRSF000412">
    <property type="entry name" value="SHMT"/>
    <property type="match status" value="1"/>
</dbReference>
<dbReference type="SUPFAM" id="SSF53383">
    <property type="entry name" value="PLP-dependent transferases"/>
    <property type="match status" value="1"/>
</dbReference>
<dbReference type="PROSITE" id="PS00096">
    <property type="entry name" value="SHMT"/>
    <property type="match status" value="1"/>
</dbReference>
<evidence type="ECO:0000255" key="1">
    <source>
        <dbReference type="HAMAP-Rule" id="MF_00051"/>
    </source>
</evidence>
<proteinExistence type="inferred from homology"/>
<keyword id="KW-0028">Amino-acid biosynthesis</keyword>
<keyword id="KW-0963">Cytoplasm</keyword>
<keyword id="KW-0554">One-carbon metabolism</keyword>
<keyword id="KW-0663">Pyridoxal phosphate</keyword>
<keyword id="KW-0808">Transferase</keyword>
<reference key="1">
    <citation type="journal article" date="2009" name="Infect. Immun.">
        <title>Comparative genomics reveal extensive transposon-mediated genomic plasticity and diversity among potential effector proteins within the genus Coxiella.</title>
        <authorList>
            <person name="Beare P.A."/>
            <person name="Unsworth N."/>
            <person name="Andoh M."/>
            <person name="Voth D.E."/>
            <person name="Omsland A."/>
            <person name="Gilk S.D."/>
            <person name="Williams K.P."/>
            <person name="Sobral B.W."/>
            <person name="Kupko J.J. III"/>
            <person name="Porcella S.F."/>
            <person name="Samuel J.E."/>
            <person name="Heinzen R.A."/>
        </authorList>
    </citation>
    <scope>NUCLEOTIDE SEQUENCE [LARGE SCALE GENOMIC DNA]</scope>
    <source>
        <strain>CbuK_Q154</strain>
    </source>
</reference>
<comment type="function">
    <text evidence="1">Catalyzes the reversible interconversion of serine and glycine with tetrahydrofolate (THF) serving as the one-carbon carrier. This reaction serves as the major source of one-carbon groups required for the biosynthesis of purines, thymidylate, methionine, and other important biomolecules. Also exhibits THF-independent aldolase activity toward beta-hydroxyamino acids, producing glycine and aldehydes, via a retro-aldol mechanism.</text>
</comment>
<comment type="catalytic activity">
    <reaction evidence="1">
        <text>(6R)-5,10-methylene-5,6,7,8-tetrahydrofolate + glycine + H2O = (6S)-5,6,7,8-tetrahydrofolate + L-serine</text>
        <dbReference type="Rhea" id="RHEA:15481"/>
        <dbReference type="ChEBI" id="CHEBI:15377"/>
        <dbReference type="ChEBI" id="CHEBI:15636"/>
        <dbReference type="ChEBI" id="CHEBI:33384"/>
        <dbReference type="ChEBI" id="CHEBI:57305"/>
        <dbReference type="ChEBI" id="CHEBI:57453"/>
        <dbReference type="EC" id="2.1.2.1"/>
    </reaction>
</comment>
<comment type="cofactor">
    <cofactor evidence="1">
        <name>pyridoxal 5'-phosphate</name>
        <dbReference type="ChEBI" id="CHEBI:597326"/>
    </cofactor>
</comment>
<comment type="pathway">
    <text evidence="1">One-carbon metabolism; tetrahydrofolate interconversion.</text>
</comment>
<comment type="pathway">
    <text evidence="1">Amino-acid biosynthesis; glycine biosynthesis; glycine from L-serine: step 1/1.</text>
</comment>
<comment type="subunit">
    <text evidence="1">Homodimer.</text>
</comment>
<comment type="subcellular location">
    <subcellularLocation>
        <location evidence="1">Cytoplasm</location>
    </subcellularLocation>
</comment>
<comment type="similarity">
    <text evidence="1">Belongs to the SHMT family.</text>
</comment>
<organism>
    <name type="scientific">Coxiella burnetii (strain CbuK_Q154)</name>
    <name type="common">Coxiella burnetii (strain Q154)</name>
    <dbReference type="NCBI Taxonomy" id="434924"/>
    <lineage>
        <taxon>Bacteria</taxon>
        <taxon>Pseudomonadati</taxon>
        <taxon>Pseudomonadota</taxon>
        <taxon>Gammaproteobacteria</taxon>
        <taxon>Legionellales</taxon>
        <taxon>Coxiellaceae</taxon>
        <taxon>Coxiella</taxon>
    </lineage>
</organism>
<name>GLYA_COXB1</name>
<sequence>MYEPTLTVESFDSELAGAIRDERRRQEHHVELIASENYVSPRVLELQGSVLTNKYAEGYPGRRYYGGCEFVDIAEQLAIDRAKELFGADYANVQPHSGSQANAEAYMALMNPGDTLLAMDLSHGGHLTHGSPVSFSGKFYKAVHYGLNAHGDIDYEQAAQLAQEHKPKVILAGFSAFSGIVDWQRFREIADSVNAYFMTDIAHVAGLVAAGVYPSPVQIADVTTTTTHKTLRGPRAGLILAKANPELEKRLNSAVFPGSQGGPLMHIIAAKAVAFKEAMQPEFKTYAQQILKNAKAMAEVMKERGYTIVSGGTQNHLFLVSLLDKNISGKEAEAALGRANITVNKNTVPGETRSPFVTSGLRIGTPAITTRGFKEKEASQLAHWVCDILDDIHNEKVIADVKQKADELCGKFPVYQELD</sequence>
<gene>
    <name evidence="1" type="primary">glyA</name>
    <name type="ordered locus">CbuK_1492</name>
</gene>
<accession>B6J8Q9</accession>
<protein>
    <recommendedName>
        <fullName evidence="1">Serine hydroxymethyltransferase</fullName>
        <shortName evidence="1">SHMT</shortName>
        <shortName evidence="1">Serine methylase</shortName>
        <ecNumber evidence="1">2.1.2.1</ecNumber>
    </recommendedName>
</protein>